<sequence>MPSFDVVSEVDTHELTNAIDQANRELATRFDFKGVDAKFERDGDVINQFAPTEFQLKQMNDILRARLAARGIDVLSLEFGDIETNLAQARQKITVKQGIEQKIAKKIAAALKDAKLKVESQINGDKLRVQGKKRDDLQDAIAVLKAGKFELPLQFNNFRD</sequence>
<dbReference type="EMBL" id="AM743169">
    <property type="protein sequence ID" value="CAQ47481.1"/>
    <property type="molecule type" value="Genomic_DNA"/>
</dbReference>
<dbReference type="RefSeq" id="WP_005411107.1">
    <property type="nucleotide sequence ID" value="NC_010943.1"/>
</dbReference>
<dbReference type="SMR" id="B2FHW7"/>
<dbReference type="EnsemblBacteria" id="CAQ47481">
    <property type="protein sequence ID" value="CAQ47481"/>
    <property type="gene ID" value="Smlt4090"/>
</dbReference>
<dbReference type="KEGG" id="sml:Smlt4090"/>
<dbReference type="eggNOG" id="COG1666">
    <property type="taxonomic scope" value="Bacteria"/>
</dbReference>
<dbReference type="HOGENOM" id="CLU_099839_1_0_6"/>
<dbReference type="Proteomes" id="UP000008840">
    <property type="component" value="Chromosome"/>
</dbReference>
<dbReference type="GO" id="GO:0005829">
    <property type="term" value="C:cytosol"/>
    <property type="evidence" value="ECO:0007669"/>
    <property type="project" value="TreeGrafter"/>
</dbReference>
<dbReference type="GO" id="GO:0000166">
    <property type="term" value="F:nucleotide binding"/>
    <property type="evidence" value="ECO:0007669"/>
    <property type="project" value="TreeGrafter"/>
</dbReference>
<dbReference type="CDD" id="cd11740">
    <property type="entry name" value="YajQ_like"/>
    <property type="match status" value="1"/>
</dbReference>
<dbReference type="Gene3D" id="3.30.70.860">
    <property type="match status" value="1"/>
</dbReference>
<dbReference type="Gene3D" id="3.30.70.990">
    <property type="entry name" value="YajQ-like, domain 2"/>
    <property type="match status" value="1"/>
</dbReference>
<dbReference type="HAMAP" id="MF_00632">
    <property type="entry name" value="YajQ"/>
    <property type="match status" value="1"/>
</dbReference>
<dbReference type="InterPro" id="IPR007551">
    <property type="entry name" value="DUF520"/>
</dbReference>
<dbReference type="InterPro" id="IPR035571">
    <property type="entry name" value="UPF0234-like_C"/>
</dbReference>
<dbReference type="InterPro" id="IPR035570">
    <property type="entry name" value="UPF0234_N"/>
</dbReference>
<dbReference type="InterPro" id="IPR036183">
    <property type="entry name" value="YajQ-like_sf"/>
</dbReference>
<dbReference type="NCBIfam" id="NF003819">
    <property type="entry name" value="PRK05412.1"/>
    <property type="match status" value="1"/>
</dbReference>
<dbReference type="PANTHER" id="PTHR30476">
    <property type="entry name" value="UPF0234 PROTEIN YAJQ"/>
    <property type="match status" value="1"/>
</dbReference>
<dbReference type="PANTHER" id="PTHR30476:SF0">
    <property type="entry name" value="UPF0234 PROTEIN YAJQ"/>
    <property type="match status" value="1"/>
</dbReference>
<dbReference type="Pfam" id="PF04461">
    <property type="entry name" value="DUF520"/>
    <property type="match status" value="1"/>
</dbReference>
<dbReference type="SUPFAM" id="SSF89963">
    <property type="entry name" value="YajQ-like"/>
    <property type="match status" value="2"/>
</dbReference>
<protein>
    <recommendedName>
        <fullName evidence="4">Cyclic di-GMP-binding protein Smlt4090</fullName>
    </recommendedName>
</protein>
<keyword id="KW-0547">Nucleotide-binding</keyword>
<keyword id="KW-1185">Reference proteome</keyword>
<keyword id="KW-0843">Virulence</keyword>
<gene>
    <name type="ordered locus">Smlt4090</name>
</gene>
<organism>
    <name type="scientific">Stenotrophomonas maltophilia (strain K279a)</name>
    <dbReference type="NCBI Taxonomy" id="522373"/>
    <lineage>
        <taxon>Bacteria</taxon>
        <taxon>Pseudomonadati</taxon>
        <taxon>Pseudomonadota</taxon>
        <taxon>Gammaproteobacteria</taxon>
        <taxon>Lysobacterales</taxon>
        <taxon>Lysobacteraceae</taxon>
        <taxon>Stenotrophomonas</taxon>
        <taxon>Stenotrophomonas maltophilia group</taxon>
    </lineage>
</organism>
<reference key="1">
    <citation type="journal article" date="2008" name="Genome Biol.">
        <title>The complete genome, comparative and functional analysis of Stenotrophomonas maltophilia reveals an organism heavily shielded by drug resistance determinants.</title>
        <authorList>
            <person name="Crossman L.C."/>
            <person name="Gould V.C."/>
            <person name="Dow J.M."/>
            <person name="Vernikos G.S."/>
            <person name="Okazaki A."/>
            <person name="Sebaihia M."/>
            <person name="Saunders D."/>
            <person name="Arrowsmith C."/>
            <person name="Carver T."/>
            <person name="Peters N."/>
            <person name="Adlem E."/>
            <person name="Kerhornou A."/>
            <person name="Lord A."/>
            <person name="Murphy L."/>
            <person name="Seeger K."/>
            <person name="Squares R."/>
            <person name="Rutter S."/>
            <person name="Quail M.A."/>
            <person name="Rajandream M.A."/>
            <person name="Harris D."/>
            <person name="Churcher C."/>
            <person name="Bentley S.D."/>
            <person name="Parkhill J."/>
            <person name="Thomson N.R."/>
            <person name="Avison M.B."/>
        </authorList>
    </citation>
    <scope>NUCLEOTIDE SEQUENCE [LARGE SCALE GENOMIC DNA]</scope>
    <source>
        <strain>K279a</strain>
    </source>
</reference>
<reference key="2">
    <citation type="journal article" date="2014" name="PLoS Pathog.">
        <title>Novel cyclic di-GMP effectors of the YajQ protein family control bacterial virulence.</title>
        <authorList>
            <person name="An S.Q."/>
            <person name="Caly D.L."/>
            <person name="McCarthy Y."/>
            <person name="Murdoch S.L."/>
            <person name="Ward J."/>
            <person name="Febrer M."/>
            <person name="Dow J.M."/>
            <person name="Ryan R.P."/>
        </authorList>
    </citation>
    <scope>FUNCTION</scope>
    <scope>DISRUPTION PHENOTYPE</scope>
</reference>
<comment type="function">
    <text evidence="3">Cyclic di-GMP effector that significantly contributes to virulence (PubMed:25329577). Binds bis-(3',5')-cyclic diguanylate (cyclic di-GMP or c-di-GMP), an important bacterial second messenger that controls a wide range of cellular processes (PubMed:25329577).</text>
</comment>
<comment type="disruption phenotype">
    <text evidence="3">Disruption of the gene leads to reduced adhesion to monolayers of human bronchial epithelial cells compared to the wild-type (PubMed:25329577). Mutant has reduced persistence in C57BL/6 mice compared to the wild-type strain (PubMed:25329577).</text>
</comment>
<comment type="similarity">
    <text evidence="2 5">Belongs to the YajQ family.</text>
</comment>
<accession>B2FHW7</accession>
<proteinExistence type="inferred from homology"/>
<feature type="chain" id="PRO_1000130655" description="Cyclic di-GMP-binding protein Smlt4090">
    <location>
        <begin position="1"/>
        <end position="160"/>
    </location>
</feature>
<feature type="binding site" evidence="1">
    <location>
        <position position="33"/>
    </location>
    <ligand>
        <name>3',3'-c-di-GMP</name>
        <dbReference type="ChEBI" id="CHEBI:58805"/>
        <label>1</label>
    </ligand>
</feature>
<feature type="binding site" evidence="1">
    <location>
        <position position="132"/>
    </location>
    <ligand>
        <name>3',3'-c-di-GMP</name>
        <dbReference type="ChEBI" id="CHEBI:58805"/>
        <label>2</label>
    </ligand>
</feature>
<feature type="binding site" evidence="1">
    <location>
        <position position="134"/>
    </location>
    <ligand>
        <name>3',3'-c-di-GMP</name>
        <dbReference type="ChEBI" id="CHEBI:58805"/>
        <label>2</label>
    </ligand>
</feature>
<feature type="binding site" evidence="1">
    <location>
        <position position="135"/>
    </location>
    <ligand>
        <name>3',3'-c-di-GMP</name>
        <dbReference type="ChEBI" id="CHEBI:58805"/>
        <label>2</label>
    </ligand>
</feature>
<feature type="binding site" evidence="1">
    <location>
        <position position="160"/>
    </location>
    <ligand>
        <name>3',3'-c-di-GMP</name>
        <dbReference type="ChEBI" id="CHEBI:58805"/>
        <label>2</label>
    </ligand>
</feature>
<name>Y4090_STRMK</name>
<evidence type="ECO:0000250" key="1">
    <source>
        <dbReference type="UniProtKB" id="Q8ZRC9"/>
    </source>
</evidence>
<evidence type="ECO:0000255" key="2">
    <source>
        <dbReference type="HAMAP-Rule" id="MF_00632"/>
    </source>
</evidence>
<evidence type="ECO:0000269" key="3">
    <source>
    </source>
</evidence>
<evidence type="ECO:0000305" key="4"/>
<evidence type="ECO:0000305" key="5">
    <source>
    </source>
</evidence>